<feature type="chain" id="PRO_0000337954" description="Cell cycle protein GpsB">
    <location>
        <begin position="1"/>
        <end position="109"/>
    </location>
</feature>
<feature type="coiled-coil region" evidence="1">
    <location>
        <begin position="36"/>
        <end position="63"/>
    </location>
</feature>
<feature type="helix" evidence="3">
    <location>
        <begin position="8"/>
        <end position="13"/>
    </location>
</feature>
<feature type="strand" evidence="3">
    <location>
        <begin position="21"/>
        <end position="23"/>
    </location>
</feature>
<feature type="helix" evidence="3">
    <location>
        <begin position="25"/>
        <end position="60"/>
    </location>
</feature>
<proteinExistence type="evidence at protein level"/>
<gene>
    <name evidence="1" type="primary">gpsB</name>
    <name type="ordered locus">spr0332</name>
</gene>
<dbReference type="EMBL" id="AE007317">
    <property type="protein sequence ID" value="AAK99136.1"/>
    <property type="status" value="ALT_INIT"/>
    <property type="molecule type" value="Genomic_DNA"/>
</dbReference>
<dbReference type="PIR" id="D97913">
    <property type="entry name" value="D97913"/>
</dbReference>
<dbReference type="RefSeq" id="NP_357926.1">
    <property type="nucleotide sequence ID" value="NC_003098.1"/>
</dbReference>
<dbReference type="RefSeq" id="WP_000146522.1">
    <property type="nucleotide sequence ID" value="NC_003098.1"/>
</dbReference>
<dbReference type="PDB" id="6GQA">
    <property type="method" value="X-ray"/>
    <property type="resolution" value="1.90 A"/>
    <property type="chains" value="A/B/C/D=4-63"/>
</dbReference>
<dbReference type="PDB" id="6GQN">
    <property type="method" value="X-ray"/>
    <property type="resolution" value="1.80 A"/>
    <property type="chains" value="A/B=4-63"/>
</dbReference>
<dbReference type="PDBsum" id="6GQA"/>
<dbReference type="PDBsum" id="6GQN"/>
<dbReference type="SMR" id="Q8DR57"/>
<dbReference type="BioGRID" id="4182179">
    <property type="interactions" value="6"/>
</dbReference>
<dbReference type="STRING" id="171101.spr0332"/>
<dbReference type="GeneID" id="45652165"/>
<dbReference type="KEGG" id="spr:spr0332"/>
<dbReference type="PATRIC" id="fig|171101.6.peg.371"/>
<dbReference type="eggNOG" id="COG3599">
    <property type="taxonomic scope" value="Bacteria"/>
</dbReference>
<dbReference type="HOGENOM" id="CLU_140309_1_0_9"/>
<dbReference type="Proteomes" id="UP000000586">
    <property type="component" value="Chromosome"/>
</dbReference>
<dbReference type="GO" id="GO:0005737">
    <property type="term" value="C:cytoplasm"/>
    <property type="evidence" value="ECO:0007669"/>
    <property type="project" value="UniProtKB-SubCell"/>
</dbReference>
<dbReference type="GO" id="GO:0051301">
    <property type="term" value="P:cell division"/>
    <property type="evidence" value="ECO:0007669"/>
    <property type="project" value="UniProtKB-UniRule"/>
</dbReference>
<dbReference type="GO" id="GO:0009273">
    <property type="term" value="P:peptidoglycan-based cell wall biogenesis"/>
    <property type="evidence" value="ECO:0000318"/>
    <property type="project" value="GO_Central"/>
</dbReference>
<dbReference type="GO" id="GO:0008360">
    <property type="term" value="P:regulation of cell shape"/>
    <property type="evidence" value="ECO:0007669"/>
    <property type="project" value="UniProtKB-UniRule"/>
</dbReference>
<dbReference type="Gene3D" id="6.10.250.660">
    <property type="match status" value="1"/>
</dbReference>
<dbReference type="HAMAP" id="MF_02011">
    <property type="entry name" value="GpsB"/>
    <property type="match status" value="1"/>
</dbReference>
<dbReference type="InterPro" id="IPR011229">
    <property type="entry name" value="Cell_cycle_GpsB"/>
</dbReference>
<dbReference type="InterPro" id="IPR019933">
    <property type="entry name" value="DivIVA_domain"/>
</dbReference>
<dbReference type="InterPro" id="IPR007793">
    <property type="entry name" value="DivIVA_fam"/>
</dbReference>
<dbReference type="NCBIfam" id="TIGR03544">
    <property type="entry name" value="DivI1A_domain"/>
    <property type="match status" value="1"/>
</dbReference>
<dbReference type="NCBIfam" id="NF010725">
    <property type="entry name" value="PRK14127.1"/>
    <property type="match status" value="1"/>
</dbReference>
<dbReference type="PANTHER" id="PTHR35794:SF1">
    <property type="entry name" value="CELL CYCLE PROTEIN GPSB"/>
    <property type="match status" value="1"/>
</dbReference>
<dbReference type="PANTHER" id="PTHR35794">
    <property type="entry name" value="CELL DIVISION PROTEIN DIVIVA"/>
    <property type="match status" value="1"/>
</dbReference>
<dbReference type="Pfam" id="PF05103">
    <property type="entry name" value="DivIVA"/>
    <property type="match status" value="1"/>
</dbReference>
<dbReference type="PIRSF" id="PIRSF029938">
    <property type="entry name" value="UCP029938"/>
    <property type="match status" value="1"/>
</dbReference>
<evidence type="ECO:0000255" key="1">
    <source>
        <dbReference type="HAMAP-Rule" id="MF_02011"/>
    </source>
</evidence>
<evidence type="ECO:0000305" key="2"/>
<evidence type="ECO:0007829" key="3">
    <source>
        <dbReference type="PDB" id="6GQN"/>
    </source>
</evidence>
<sequence>MASIIFSAKDIFEQEFGREVRGYNKVEVDEFLDDVIKDYETYAALVKSLRQEIADLKEELTRKPKPSPVQAEPLEAAITSSMTNFDILKRLNRLEKEVFGKQILDNSDF</sequence>
<accession>Q8DR57</accession>
<organism>
    <name type="scientific">Streptococcus pneumoniae (strain ATCC BAA-255 / R6)</name>
    <dbReference type="NCBI Taxonomy" id="171101"/>
    <lineage>
        <taxon>Bacteria</taxon>
        <taxon>Bacillati</taxon>
        <taxon>Bacillota</taxon>
        <taxon>Bacilli</taxon>
        <taxon>Lactobacillales</taxon>
        <taxon>Streptococcaceae</taxon>
        <taxon>Streptococcus</taxon>
    </lineage>
</organism>
<keyword id="KW-0002">3D-structure</keyword>
<keyword id="KW-0131">Cell cycle</keyword>
<keyword id="KW-0132">Cell division</keyword>
<keyword id="KW-0133">Cell shape</keyword>
<keyword id="KW-0175">Coiled coil</keyword>
<keyword id="KW-0963">Cytoplasm</keyword>
<keyword id="KW-1185">Reference proteome</keyword>
<name>GPSB_STRR6</name>
<reference key="1">
    <citation type="journal article" date="2001" name="J. Bacteriol.">
        <title>Genome of the bacterium Streptococcus pneumoniae strain R6.</title>
        <authorList>
            <person name="Hoskins J."/>
            <person name="Alborn W.E. Jr."/>
            <person name="Arnold J."/>
            <person name="Blaszczak L.C."/>
            <person name="Burgett S."/>
            <person name="DeHoff B.S."/>
            <person name="Estrem S.T."/>
            <person name="Fritz L."/>
            <person name="Fu D.-J."/>
            <person name="Fuller W."/>
            <person name="Geringer C."/>
            <person name="Gilmour R."/>
            <person name="Glass J.S."/>
            <person name="Khoja H."/>
            <person name="Kraft A.R."/>
            <person name="Lagace R.E."/>
            <person name="LeBlanc D.J."/>
            <person name="Lee L.N."/>
            <person name="Lefkowitz E.J."/>
            <person name="Lu J."/>
            <person name="Matsushima P."/>
            <person name="McAhren S.M."/>
            <person name="McHenney M."/>
            <person name="McLeaster K."/>
            <person name="Mundy C.W."/>
            <person name="Nicas T.I."/>
            <person name="Norris F.H."/>
            <person name="O'Gara M."/>
            <person name="Peery R.B."/>
            <person name="Robertson G.T."/>
            <person name="Rockey P."/>
            <person name="Sun P.-M."/>
            <person name="Winkler M.E."/>
            <person name="Yang Y."/>
            <person name="Young-Bellido M."/>
            <person name="Zhao G."/>
            <person name="Zook C.A."/>
            <person name="Baltz R.H."/>
            <person name="Jaskunas S.R."/>
            <person name="Rosteck P.R. Jr."/>
            <person name="Skatrud P.L."/>
            <person name="Glass J.I."/>
        </authorList>
    </citation>
    <scope>NUCLEOTIDE SEQUENCE [LARGE SCALE GENOMIC DNA]</scope>
    <source>
        <strain>ATCC BAA-255 / R6</strain>
    </source>
</reference>
<protein>
    <recommendedName>
        <fullName evidence="1">Cell cycle protein GpsB</fullName>
    </recommendedName>
    <alternativeName>
        <fullName evidence="1">Guiding PBP1-shuttling protein</fullName>
    </alternativeName>
</protein>
<comment type="function">
    <text evidence="1">Divisome component that associates with the complex late in its assembly, after the Z-ring is formed, and is dependent on DivIC and PBP2B for its recruitment to the divisome. Together with EzrA, is a key component of the system that regulates PBP1 localization during cell cycle progression. Its main role could be the removal of PBP1 from the cell pole after pole maturation is completed. Also contributes to the recruitment of PBP1 to the division complex. Not essential for septum formation.</text>
</comment>
<comment type="subunit">
    <text evidence="1">Forms polymers through the coiled coil domains. Interacts with PBP1, MreC and EzrA.</text>
</comment>
<comment type="subcellular location">
    <subcellularLocation>
        <location evidence="1">Cytoplasm</location>
    </subcellularLocation>
    <text evidence="1">Shuttles between the lateral wall and the division site in a cell cycle-dependent manner.</text>
</comment>
<comment type="similarity">
    <text evidence="1">Belongs to the GpsB family.</text>
</comment>
<comment type="sequence caution" evidence="2">
    <conflict type="erroneous initiation">
        <sequence resource="EMBL-CDS" id="AAK99136"/>
    </conflict>
</comment>